<keyword id="KW-0150">Chloroplast</keyword>
<keyword id="KW-0249">Electron transport</keyword>
<keyword id="KW-0472">Membrane</keyword>
<keyword id="KW-0602">Photosynthesis</keyword>
<keyword id="KW-0934">Plastid</keyword>
<keyword id="KW-0793">Thylakoid</keyword>
<keyword id="KW-0812">Transmembrane</keyword>
<keyword id="KW-1133">Transmembrane helix</keyword>
<keyword id="KW-0813">Transport</keyword>
<feature type="chain" id="PRO_0000061847" description="Cytochrome b6-f complex subunit 4">
    <location>
        <begin position="1"/>
        <end position="160"/>
    </location>
</feature>
<feature type="transmembrane region" description="Helical" evidence="2">
    <location>
        <begin position="36"/>
        <end position="56"/>
    </location>
</feature>
<feature type="transmembrane region" description="Helical" evidence="2">
    <location>
        <begin position="95"/>
        <end position="115"/>
    </location>
</feature>
<feature type="transmembrane region" description="Helical" evidence="2">
    <location>
        <begin position="131"/>
        <end position="151"/>
    </location>
</feature>
<proteinExistence type="inferred from homology"/>
<accession>Q7FNS2</accession>
<reference key="1">
    <citation type="journal article" date="2002" name="Mol. Biol. Evol.">
        <title>The plastid chromosome of Atropa belladonna and its comparison with that of Nicotiana tabacum: the role of RNA editing in generating divergence in the process of plant speciation.</title>
        <authorList>
            <person name="Schmitz-Linneweber C."/>
            <person name="Regel R."/>
            <person name="Du T.G."/>
            <person name="Hupfer H."/>
            <person name="Herrmann R.G."/>
            <person name="Maier R.M."/>
        </authorList>
    </citation>
    <scope>NUCLEOTIDE SEQUENCE [LARGE SCALE GENOMIC DNA]</scope>
    <source>
        <strain>cv. Ab5p(kan)</strain>
    </source>
</reference>
<dbReference type="EMBL" id="AJ316582">
    <property type="protein sequence ID" value="CAC88075.1"/>
    <property type="molecule type" value="Genomic_DNA"/>
</dbReference>
<dbReference type="RefSeq" id="NP_783262.1">
    <property type="nucleotide sequence ID" value="NC_004561.1"/>
</dbReference>
<dbReference type="SMR" id="Q7FNS2"/>
<dbReference type="GeneID" id="806553"/>
<dbReference type="GO" id="GO:0009535">
    <property type="term" value="C:chloroplast thylakoid membrane"/>
    <property type="evidence" value="ECO:0007669"/>
    <property type="project" value="UniProtKB-SubCell"/>
</dbReference>
<dbReference type="GO" id="GO:0045158">
    <property type="term" value="F:electron transporter, transferring electrons within cytochrome b6/f complex of photosystem II activity"/>
    <property type="evidence" value="ECO:0007669"/>
    <property type="project" value="UniProtKB-UniRule"/>
</dbReference>
<dbReference type="GO" id="GO:0045156">
    <property type="term" value="F:electron transporter, transferring electrons within the cyclic electron transport pathway of photosynthesis activity"/>
    <property type="evidence" value="ECO:0007669"/>
    <property type="project" value="InterPro"/>
</dbReference>
<dbReference type="GO" id="GO:0016491">
    <property type="term" value="F:oxidoreductase activity"/>
    <property type="evidence" value="ECO:0007669"/>
    <property type="project" value="InterPro"/>
</dbReference>
<dbReference type="GO" id="GO:0009767">
    <property type="term" value="P:photosynthetic electron transport chain"/>
    <property type="evidence" value="ECO:0007669"/>
    <property type="project" value="InterPro"/>
</dbReference>
<dbReference type="CDD" id="cd00290">
    <property type="entry name" value="cytochrome_b_C"/>
    <property type="match status" value="1"/>
</dbReference>
<dbReference type="FunFam" id="1.10.287.980:FF:000001">
    <property type="entry name" value="Cytochrome b6-f complex subunit 4"/>
    <property type="match status" value="1"/>
</dbReference>
<dbReference type="FunFam" id="1.20.5.510:FF:000002">
    <property type="entry name" value="Cytochrome b6-f complex subunit 4"/>
    <property type="match status" value="1"/>
</dbReference>
<dbReference type="Gene3D" id="1.10.287.980">
    <property type="entry name" value="plastocyanin oxidoreductase"/>
    <property type="match status" value="1"/>
</dbReference>
<dbReference type="Gene3D" id="1.20.5.510">
    <property type="entry name" value="Single helix bin"/>
    <property type="match status" value="1"/>
</dbReference>
<dbReference type="HAMAP" id="MF_01344">
    <property type="entry name" value="Cytb6_f_subIV"/>
    <property type="match status" value="1"/>
</dbReference>
<dbReference type="InterPro" id="IPR005798">
    <property type="entry name" value="Cyt_b/b6_C"/>
</dbReference>
<dbReference type="InterPro" id="IPR036150">
    <property type="entry name" value="Cyt_b/b6_C_sf"/>
</dbReference>
<dbReference type="InterPro" id="IPR005870">
    <property type="entry name" value="Cyt_b6/f_cplx_suIV"/>
</dbReference>
<dbReference type="InterPro" id="IPR048260">
    <property type="entry name" value="Cytochrome_b_C_euk/bac"/>
</dbReference>
<dbReference type="NCBIfam" id="TIGR01156">
    <property type="entry name" value="cytb6_f_IV"/>
    <property type="match status" value="1"/>
</dbReference>
<dbReference type="PANTHER" id="PTHR19271">
    <property type="entry name" value="CYTOCHROME B"/>
    <property type="match status" value="1"/>
</dbReference>
<dbReference type="PANTHER" id="PTHR19271:SF16">
    <property type="entry name" value="CYTOCHROME B"/>
    <property type="match status" value="1"/>
</dbReference>
<dbReference type="Pfam" id="PF00032">
    <property type="entry name" value="Cytochrom_B_C"/>
    <property type="match status" value="1"/>
</dbReference>
<dbReference type="PIRSF" id="PIRSF000033">
    <property type="entry name" value="B6f_17K"/>
    <property type="match status" value="1"/>
</dbReference>
<dbReference type="SUPFAM" id="SSF81648">
    <property type="entry name" value="a domain/subunit of cytochrome bc1 complex (Ubiquinol-cytochrome c reductase)"/>
    <property type="match status" value="1"/>
</dbReference>
<dbReference type="PROSITE" id="PS51003">
    <property type="entry name" value="CYTB_CTER"/>
    <property type="match status" value="1"/>
</dbReference>
<name>PETD_ATRBE</name>
<comment type="function">
    <text evidence="2">Component of the cytochrome b6-f complex, which mediates electron transfer between photosystem II (PSII) and photosystem I (PSI), cyclic electron flow around PSI, and state transitions.</text>
</comment>
<comment type="subunit">
    <text evidence="1">The 4 large subunits of the cytochrome b6-f complex are cytochrome b6, subunit IV (17 kDa polypeptide, petD), cytochrome f and the Rieske protein, while the 4 small subunits are petG, petL, petM and petN. The complex functions as a dimer (By similarity).</text>
</comment>
<comment type="subcellular location">
    <subcellularLocation>
        <location evidence="2">Plastid</location>
        <location evidence="2">Chloroplast thylakoid membrane</location>
        <topology evidence="2">Multi-pass membrane protein</topology>
    </subcellularLocation>
</comment>
<comment type="similarity">
    <text evidence="2">Belongs to the cytochrome b family. PetD subfamily.</text>
</comment>
<protein>
    <recommendedName>
        <fullName evidence="2">Cytochrome b6-f complex subunit 4</fullName>
    </recommendedName>
    <alternativeName>
        <fullName evidence="2">17 kDa polypeptide</fullName>
    </alternativeName>
</protein>
<gene>
    <name evidence="2" type="primary">petD</name>
</gene>
<organism>
    <name type="scientific">Atropa belladonna</name>
    <name type="common">Belladonna</name>
    <name type="synonym">Deadly nightshade</name>
    <dbReference type="NCBI Taxonomy" id="33113"/>
    <lineage>
        <taxon>Eukaryota</taxon>
        <taxon>Viridiplantae</taxon>
        <taxon>Streptophyta</taxon>
        <taxon>Embryophyta</taxon>
        <taxon>Tracheophyta</taxon>
        <taxon>Spermatophyta</taxon>
        <taxon>Magnoliopsida</taxon>
        <taxon>eudicotyledons</taxon>
        <taxon>Gunneridae</taxon>
        <taxon>Pentapetalae</taxon>
        <taxon>asterids</taxon>
        <taxon>lamiids</taxon>
        <taxon>Solanales</taxon>
        <taxon>Solanaceae</taxon>
        <taxon>Solanoideae</taxon>
        <taxon>Hyoscyameae</taxon>
        <taxon>Atropa</taxon>
    </lineage>
</organism>
<geneLocation type="chloroplast"/>
<evidence type="ECO:0000250" key="1"/>
<evidence type="ECO:0000255" key="2">
    <source>
        <dbReference type="HAMAP-Rule" id="MF_01344"/>
    </source>
</evidence>
<sequence length="160" mass="17459">MGVTKKPDLNDPVLRAKLAKGMGHNYYGEPAWPNDLLYIFPVVILGTIACNVGLAVLEPSMIGEPADPFATPLEILPEWYFFPVFQILRTVPNKLLGVLLMVSVPAGLLTVPFLENVNKFQNPFRRPVATTVFLIGTAVALWLGIGATLPIDKSLTLGLF</sequence>